<proteinExistence type="evidence at protein level"/>
<accession>Q78YZ6</accession>
<accession>B2RV68</accession>
<accession>Q32NY7</accession>
<accession>Q3TJC8</accession>
<accession>Q58E48</accession>
<accession>Q5U450</accession>
<accession>Q9WU55</accession>
<keyword id="KW-0025">Alternative splicing</keyword>
<keyword id="KW-0175">Coiled coil</keyword>
<keyword id="KW-0963">Cytoplasm</keyword>
<keyword id="KW-0333">Golgi apparatus</keyword>
<keyword id="KW-0472">Membrane</keyword>
<keyword id="KW-1185">Reference proteome</keyword>
<feature type="chain" id="PRO_0000334165" description="Short coiled-coil protein">
    <location>
        <begin position="1"/>
        <end position="125"/>
    </location>
</feature>
<feature type="region of interest" description="Disordered" evidence="3">
    <location>
        <begin position="1"/>
        <end position="31"/>
    </location>
</feature>
<feature type="coiled-coil region" evidence="2">
    <location>
        <begin position="43"/>
        <end position="101"/>
    </location>
</feature>
<feature type="splice variant" id="VSP_033646" description="In isoform 2 and isoform 3." evidence="4 5 6">
    <location>
        <begin position="1"/>
        <end position="43"/>
    </location>
</feature>
<feature type="splice variant" id="VSP_033647" description="In isoform 3." evidence="5">
    <location>
        <position position="51"/>
    </location>
</feature>
<feature type="sequence conflict" description="In Ref. 3; AAI08408." evidence="7" ref="3">
    <original>STGEEEDSTFTSISLEDDT</original>
    <variation>AARPEASYPSRLFPALQTQ</variation>
    <location>
        <begin position="8"/>
        <end position="26"/>
    </location>
</feature>
<feature type="sequence conflict" description="In Ref. 3; AAI08408." evidence="7" ref="3">
    <original>W</original>
    <variation>L</variation>
    <location>
        <position position="33"/>
    </location>
</feature>
<gene>
    <name type="primary">Scoc</name>
    <name type="synonym">Scoco</name>
</gene>
<name>SCOC_MOUSE</name>
<protein>
    <recommendedName>
        <fullName>Short coiled-coil protein</fullName>
    </recommendedName>
</protein>
<reference key="1">
    <citation type="submission" date="1998-12" db="EMBL/GenBank/DDBJ databases">
        <title>Yeast two-hybrid interaction between metaxin 1 and a novel protein consisting of a single short coiled coil domain.</title>
        <authorList>
            <person name="Armstrong L.C."/>
            <person name="Bornstein P."/>
        </authorList>
    </citation>
    <scope>NUCLEOTIDE SEQUENCE [MRNA] (ISOFORM 2)</scope>
</reference>
<reference key="2">
    <citation type="journal article" date="2005" name="Science">
        <title>The transcriptional landscape of the mammalian genome.</title>
        <authorList>
            <person name="Carninci P."/>
            <person name="Kasukawa T."/>
            <person name="Katayama S."/>
            <person name="Gough J."/>
            <person name="Frith M.C."/>
            <person name="Maeda N."/>
            <person name="Oyama R."/>
            <person name="Ravasi T."/>
            <person name="Lenhard B."/>
            <person name="Wells C."/>
            <person name="Kodzius R."/>
            <person name="Shimokawa K."/>
            <person name="Bajic V.B."/>
            <person name="Brenner S.E."/>
            <person name="Batalov S."/>
            <person name="Forrest A.R."/>
            <person name="Zavolan M."/>
            <person name="Davis M.J."/>
            <person name="Wilming L.G."/>
            <person name="Aidinis V."/>
            <person name="Allen J.E."/>
            <person name="Ambesi-Impiombato A."/>
            <person name="Apweiler R."/>
            <person name="Aturaliya R.N."/>
            <person name="Bailey T.L."/>
            <person name="Bansal M."/>
            <person name="Baxter L."/>
            <person name="Beisel K.W."/>
            <person name="Bersano T."/>
            <person name="Bono H."/>
            <person name="Chalk A.M."/>
            <person name="Chiu K.P."/>
            <person name="Choudhary V."/>
            <person name="Christoffels A."/>
            <person name="Clutterbuck D.R."/>
            <person name="Crowe M.L."/>
            <person name="Dalla E."/>
            <person name="Dalrymple B.P."/>
            <person name="de Bono B."/>
            <person name="Della Gatta G."/>
            <person name="di Bernardo D."/>
            <person name="Down T."/>
            <person name="Engstrom P."/>
            <person name="Fagiolini M."/>
            <person name="Faulkner G."/>
            <person name="Fletcher C.F."/>
            <person name="Fukushima T."/>
            <person name="Furuno M."/>
            <person name="Futaki S."/>
            <person name="Gariboldi M."/>
            <person name="Georgii-Hemming P."/>
            <person name="Gingeras T.R."/>
            <person name="Gojobori T."/>
            <person name="Green R.E."/>
            <person name="Gustincich S."/>
            <person name="Harbers M."/>
            <person name="Hayashi Y."/>
            <person name="Hensch T.K."/>
            <person name="Hirokawa N."/>
            <person name="Hill D."/>
            <person name="Huminiecki L."/>
            <person name="Iacono M."/>
            <person name="Ikeo K."/>
            <person name="Iwama A."/>
            <person name="Ishikawa T."/>
            <person name="Jakt M."/>
            <person name="Kanapin A."/>
            <person name="Katoh M."/>
            <person name="Kawasawa Y."/>
            <person name="Kelso J."/>
            <person name="Kitamura H."/>
            <person name="Kitano H."/>
            <person name="Kollias G."/>
            <person name="Krishnan S.P."/>
            <person name="Kruger A."/>
            <person name="Kummerfeld S.K."/>
            <person name="Kurochkin I.V."/>
            <person name="Lareau L.F."/>
            <person name="Lazarevic D."/>
            <person name="Lipovich L."/>
            <person name="Liu J."/>
            <person name="Liuni S."/>
            <person name="McWilliam S."/>
            <person name="Madan Babu M."/>
            <person name="Madera M."/>
            <person name="Marchionni L."/>
            <person name="Matsuda H."/>
            <person name="Matsuzawa S."/>
            <person name="Miki H."/>
            <person name="Mignone F."/>
            <person name="Miyake S."/>
            <person name="Morris K."/>
            <person name="Mottagui-Tabar S."/>
            <person name="Mulder N."/>
            <person name="Nakano N."/>
            <person name="Nakauchi H."/>
            <person name="Ng P."/>
            <person name="Nilsson R."/>
            <person name="Nishiguchi S."/>
            <person name="Nishikawa S."/>
            <person name="Nori F."/>
            <person name="Ohara O."/>
            <person name="Okazaki Y."/>
            <person name="Orlando V."/>
            <person name="Pang K.C."/>
            <person name="Pavan W.J."/>
            <person name="Pavesi G."/>
            <person name="Pesole G."/>
            <person name="Petrovsky N."/>
            <person name="Piazza S."/>
            <person name="Reed J."/>
            <person name="Reid J.F."/>
            <person name="Ring B.Z."/>
            <person name="Ringwald M."/>
            <person name="Rost B."/>
            <person name="Ruan Y."/>
            <person name="Salzberg S.L."/>
            <person name="Sandelin A."/>
            <person name="Schneider C."/>
            <person name="Schoenbach C."/>
            <person name="Sekiguchi K."/>
            <person name="Semple C.A."/>
            <person name="Seno S."/>
            <person name="Sessa L."/>
            <person name="Sheng Y."/>
            <person name="Shibata Y."/>
            <person name="Shimada H."/>
            <person name="Shimada K."/>
            <person name="Silva D."/>
            <person name="Sinclair B."/>
            <person name="Sperling S."/>
            <person name="Stupka E."/>
            <person name="Sugiura K."/>
            <person name="Sultana R."/>
            <person name="Takenaka Y."/>
            <person name="Taki K."/>
            <person name="Tammoja K."/>
            <person name="Tan S.L."/>
            <person name="Tang S."/>
            <person name="Taylor M.S."/>
            <person name="Tegner J."/>
            <person name="Teichmann S.A."/>
            <person name="Ueda H.R."/>
            <person name="van Nimwegen E."/>
            <person name="Verardo R."/>
            <person name="Wei C.L."/>
            <person name="Yagi K."/>
            <person name="Yamanishi H."/>
            <person name="Zabarovsky E."/>
            <person name="Zhu S."/>
            <person name="Zimmer A."/>
            <person name="Hide W."/>
            <person name="Bult C."/>
            <person name="Grimmond S.M."/>
            <person name="Teasdale R.D."/>
            <person name="Liu E.T."/>
            <person name="Brusic V."/>
            <person name="Quackenbush J."/>
            <person name="Wahlestedt C."/>
            <person name="Mattick J.S."/>
            <person name="Hume D.A."/>
            <person name="Kai C."/>
            <person name="Sasaki D."/>
            <person name="Tomaru Y."/>
            <person name="Fukuda S."/>
            <person name="Kanamori-Katayama M."/>
            <person name="Suzuki M."/>
            <person name="Aoki J."/>
            <person name="Arakawa T."/>
            <person name="Iida J."/>
            <person name="Imamura K."/>
            <person name="Itoh M."/>
            <person name="Kato T."/>
            <person name="Kawaji H."/>
            <person name="Kawagashira N."/>
            <person name="Kawashima T."/>
            <person name="Kojima M."/>
            <person name="Kondo S."/>
            <person name="Konno H."/>
            <person name="Nakano K."/>
            <person name="Ninomiya N."/>
            <person name="Nishio T."/>
            <person name="Okada M."/>
            <person name="Plessy C."/>
            <person name="Shibata K."/>
            <person name="Shiraki T."/>
            <person name="Suzuki S."/>
            <person name="Tagami M."/>
            <person name="Waki K."/>
            <person name="Watahiki A."/>
            <person name="Okamura-Oho Y."/>
            <person name="Suzuki H."/>
            <person name="Kawai J."/>
            <person name="Hayashizaki Y."/>
        </authorList>
    </citation>
    <scope>NUCLEOTIDE SEQUENCE [LARGE SCALE MRNA] (ISOFORMS 1; 2 AND 3)</scope>
    <source>
        <strain>C57BL/6J</strain>
        <tissue>Kidney</tissue>
        <tissue>Placenta</tissue>
        <tissue>Spleen</tissue>
    </source>
</reference>
<reference key="3">
    <citation type="journal article" date="2004" name="Genome Res.">
        <title>The status, quality, and expansion of the NIH full-length cDNA project: the Mammalian Gene Collection (MGC).</title>
        <authorList>
            <consortium name="The MGC Project Team"/>
        </authorList>
    </citation>
    <scope>NUCLEOTIDE SEQUENCE [LARGE SCALE MRNA] (ISOFORMS 1 AND 2)</scope>
    <source>
        <tissue>Brain</tissue>
        <tissue>Eye</tissue>
        <tissue>Limb</tissue>
        <tissue>Olfactory epithelium</tissue>
    </source>
</reference>
<reference key="4">
    <citation type="journal article" date="2010" name="Cell">
        <title>A tissue-specific atlas of mouse protein phosphorylation and expression.</title>
        <authorList>
            <person name="Huttlin E.L."/>
            <person name="Jedrychowski M.P."/>
            <person name="Elias J.E."/>
            <person name="Goswami T."/>
            <person name="Rad R."/>
            <person name="Beausoleil S.A."/>
            <person name="Villen J."/>
            <person name="Haas W."/>
            <person name="Sowa M.E."/>
            <person name="Gygi S.P."/>
        </authorList>
    </citation>
    <scope>IDENTIFICATION BY MASS SPECTROMETRY [LARGE SCALE ANALYSIS]</scope>
    <source>
        <tissue>Testis</tissue>
    </source>
</reference>
<comment type="function">
    <text evidence="1">Positive regulator of amino acid starvation-induced autophagy.</text>
</comment>
<comment type="subunit">
    <text evidence="1">Homodimer. Interacts with ARL1, ARL2 and ARL3. Directly interacts with FEZ1 and UVRAG. The interaction with UVRAG is reduced by amino acid starvation, but the complex is stabilized in the presence of FEZ1. Interacts with NRBF2.</text>
</comment>
<comment type="subcellular location">
    <subcellularLocation>
        <location evidence="1">Golgi apparatus membrane</location>
        <topology evidence="1">Peripheral membrane protein</topology>
        <orientation evidence="1">Cytoplasmic side</orientation>
    </subcellularLocation>
    <subcellularLocation>
        <location evidence="1">Golgi apparatus</location>
        <location evidence="1">trans-Golgi network</location>
    </subcellularLocation>
    <subcellularLocation>
        <location evidence="1">Cytoplasm</location>
        <location evidence="1">Cytosol</location>
    </subcellularLocation>
</comment>
<comment type="alternative products">
    <event type="alternative splicing"/>
    <isoform>
        <id>Q78YZ6-1</id>
        <name>1</name>
        <sequence type="displayed"/>
    </isoform>
    <isoform>
        <id>Q78YZ6-2</id>
        <name>2</name>
        <sequence type="described" ref="VSP_033646"/>
    </isoform>
    <isoform>
        <id>Q78YZ6-3</id>
        <name>3</name>
        <sequence type="described" ref="VSP_033646 VSP_033647"/>
    </isoform>
</comment>
<comment type="similarity">
    <text evidence="7">Belongs to the SCOC family.</text>
</comment>
<dbReference type="EMBL" id="AF115778">
    <property type="protein sequence ID" value="AAD26690.1"/>
    <property type="molecule type" value="mRNA"/>
</dbReference>
<dbReference type="EMBL" id="AK002521">
    <property type="protein sequence ID" value="BAB22159.2"/>
    <property type="molecule type" value="mRNA"/>
</dbReference>
<dbReference type="EMBL" id="AK003095">
    <property type="protein sequence ID" value="BAB22561.1"/>
    <property type="molecule type" value="mRNA"/>
</dbReference>
<dbReference type="EMBL" id="AK076085">
    <property type="protein sequence ID" value="BAC36171.1"/>
    <property type="molecule type" value="mRNA"/>
</dbReference>
<dbReference type="EMBL" id="AK167488">
    <property type="protein sequence ID" value="BAE39567.1"/>
    <property type="molecule type" value="mRNA"/>
</dbReference>
<dbReference type="EMBL" id="BC017629">
    <property type="protein sequence ID" value="AAH17629.1"/>
    <property type="molecule type" value="mRNA"/>
</dbReference>
<dbReference type="EMBL" id="BC085265">
    <property type="protein sequence ID" value="AAH85265.2"/>
    <property type="molecule type" value="mRNA"/>
</dbReference>
<dbReference type="EMBL" id="BC092071">
    <property type="protein sequence ID" value="AAH92071.2"/>
    <property type="molecule type" value="mRNA"/>
</dbReference>
<dbReference type="EMBL" id="BC108407">
    <property type="protein sequence ID" value="AAI08408.1"/>
    <property type="molecule type" value="mRNA"/>
</dbReference>
<dbReference type="EMBL" id="BC147069">
    <property type="protein sequence ID" value="AAI47070.1"/>
    <property type="molecule type" value="mRNA"/>
</dbReference>
<dbReference type="CCDS" id="CCDS22453.1">
    <molecule id="Q78YZ6-1"/>
</dbReference>
<dbReference type="CCDS" id="CCDS52608.1">
    <molecule id="Q78YZ6-2"/>
</dbReference>
<dbReference type="CCDS" id="CCDS85570.1">
    <molecule id="Q78YZ6-3"/>
</dbReference>
<dbReference type="RefSeq" id="NP_001034226.1">
    <molecule id="Q78YZ6-1"/>
    <property type="nucleotide sequence ID" value="NM_001039137.3"/>
</dbReference>
<dbReference type="RefSeq" id="NP_001272921.1">
    <molecule id="Q78YZ6-3"/>
    <property type="nucleotide sequence ID" value="NM_001285992.1"/>
</dbReference>
<dbReference type="RefSeq" id="NP_062682.1">
    <molecule id="Q78YZ6-2"/>
    <property type="nucleotide sequence ID" value="NM_019708.4"/>
</dbReference>
<dbReference type="RefSeq" id="XP_006531267.1">
    <molecule id="Q78YZ6-2"/>
    <property type="nucleotide sequence ID" value="XM_006531204.5"/>
</dbReference>
<dbReference type="RefSeq" id="XP_006531268.1">
    <molecule id="Q78YZ6-3"/>
    <property type="nucleotide sequence ID" value="XM_006531205.2"/>
</dbReference>
<dbReference type="SMR" id="Q78YZ6"/>
<dbReference type="BioGRID" id="207929">
    <property type="interactions" value="11"/>
</dbReference>
<dbReference type="FunCoup" id="Q78YZ6">
    <property type="interactions" value="1629"/>
</dbReference>
<dbReference type="STRING" id="10090.ENSMUSP00000080221"/>
<dbReference type="PhosphoSitePlus" id="Q78YZ6"/>
<dbReference type="PaxDb" id="10090-ENSMUSP00000080221"/>
<dbReference type="PeptideAtlas" id="Q78YZ6"/>
<dbReference type="ProteomicsDB" id="255366">
    <molecule id="Q78YZ6-1"/>
</dbReference>
<dbReference type="ProteomicsDB" id="255367">
    <molecule id="Q78YZ6-2"/>
</dbReference>
<dbReference type="ProteomicsDB" id="255368">
    <molecule id="Q78YZ6-3"/>
</dbReference>
<dbReference type="Pumba" id="Q78YZ6"/>
<dbReference type="Antibodypedia" id="52793">
    <property type="antibodies" value="68 antibodies from 20 providers"/>
</dbReference>
<dbReference type="DNASU" id="56367"/>
<dbReference type="Ensembl" id="ENSMUST00000081506.11">
    <molecule id="Q78YZ6-1"/>
    <property type="protein sequence ID" value="ENSMUSP00000080221.4"/>
    <property type="gene ID" value="ENSMUSG00000063253.12"/>
</dbReference>
<dbReference type="Ensembl" id="ENSMUST00000167525.3">
    <molecule id="Q78YZ6-3"/>
    <property type="protein sequence ID" value="ENSMUSP00000128210.3"/>
    <property type="gene ID" value="ENSMUSG00000063253.12"/>
</dbReference>
<dbReference type="Ensembl" id="ENSMUST00000212031.2">
    <molecule id="Q78YZ6-2"/>
    <property type="protein sequence ID" value="ENSMUSP00000148647.2"/>
    <property type="gene ID" value="ENSMUSG00000063253.12"/>
</dbReference>
<dbReference type="Ensembl" id="ENSMUST00000212905.2">
    <molecule id="Q78YZ6-2"/>
    <property type="protein sequence ID" value="ENSMUSP00000148577.2"/>
    <property type="gene ID" value="ENSMUSG00000063253.12"/>
</dbReference>
<dbReference type="GeneID" id="56367"/>
<dbReference type="KEGG" id="mmu:56367"/>
<dbReference type="UCSC" id="uc009mkf.2">
    <molecule id="Q78YZ6-1"/>
    <property type="organism name" value="mouse"/>
</dbReference>
<dbReference type="UCSC" id="uc009mkg.2">
    <molecule id="Q78YZ6-3"/>
    <property type="organism name" value="mouse"/>
</dbReference>
<dbReference type="AGR" id="MGI:1927654"/>
<dbReference type="CTD" id="60592"/>
<dbReference type="MGI" id="MGI:1927654">
    <property type="gene designation" value="Scoc"/>
</dbReference>
<dbReference type="VEuPathDB" id="HostDB:ENSMUSG00000063253"/>
<dbReference type="eggNOG" id="KOG3650">
    <property type="taxonomic scope" value="Eukaryota"/>
</dbReference>
<dbReference type="GeneTree" id="ENSGT00390000008828"/>
<dbReference type="HOGENOM" id="CLU_130081_1_0_1"/>
<dbReference type="InParanoid" id="Q78YZ6"/>
<dbReference type="OMA" id="HPNELDA"/>
<dbReference type="OrthoDB" id="2163284at2759"/>
<dbReference type="PhylomeDB" id="Q78YZ6"/>
<dbReference type="TreeFam" id="TF323340"/>
<dbReference type="Reactome" id="R-MMU-6811440">
    <property type="pathway name" value="Retrograde transport at the Trans-Golgi-Network"/>
</dbReference>
<dbReference type="BioGRID-ORCS" id="56367">
    <property type="hits" value="3 hits in 75 CRISPR screens"/>
</dbReference>
<dbReference type="ChiTaRS" id="Scoc">
    <property type="organism name" value="mouse"/>
</dbReference>
<dbReference type="PRO" id="PR:Q78YZ6"/>
<dbReference type="Proteomes" id="UP000000589">
    <property type="component" value="Chromosome 8"/>
</dbReference>
<dbReference type="RNAct" id="Q78YZ6">
    <property type="molecule type" value="protein"/>
</dbReference>
<dbReference type="Bgee" id="ENSMUSG00000063253">
    <property type="expression patterns" value="Expressed in hypothalamus and 80 other cell types or tissues"/>
</dbReference>
<dbReference type="ExpressionAtlas" id="Q78YZ6">
    <property type="expression patterns" value="baseline and differential"/>
</dbReference>
<dbReference type="GO" id="GO:0005829">
    <property type="term" value="C:cytosol"/>
    <property type="evidence" value="ECO:0007669"/>
    <property type="project" value="UniProtKB-SubCell"/>
</dbReference>
<dbReference type="GO" id="GO:0000139">
    <property type="term" value="C:Golgi membrane"/>
    <property type="evidence" value="ECO:0007669"/>
    <property type="project" value="UniProtKB-SubCell"/>
</dbReference>
<dbReference type="GO" id="GO:0016239">
    <property type="term" value="P:positive regulation of macroautophagy"/>
    <property type="evidence" value="ECO:0000250"/>
    <property type="project" value="GO_Central"/>
</dbReference>
<dbReference type="GO" id="GO:0061635">
    <property type="term" value="P:regulation of protein complex stability"/>
    <property type="evidence" value="ECO:0000250"/>
    <property type="project" value="GO_Central"/>
</dbReference>
<dbReference type="FunFam" id="1.20.5.170:FF:000038">
    <property type="entry name" value="Short coiled-coil protein a"/>
    <property type="match status" value="1"/>
</dbReference>
<dbReference type="Gene3D" id="1.20.5.170">
    <property type="match status" value="1"/>
</dbReference>
<dbReference type="InterPro" id="IPR019357">
    <property type="entry name" value="SCOC"/>
</dbReference>
<dbReference type="PANTHER" id="PTHR21614">
    <property type="entry name" value="SHORT COILED COIL PROTEIN"/>
    <property type="match status" value="1"/>
</dbReference>
<dbReference type="PANTHER" id="PTHR21614:SF1">
    <property type="entry name" value="SHORT COILED-COIL PROTEIN"/>
    <property type="match status" value="1"/>
</dbReference>
<dbReference type="Pfam" id="PF10224">
    <property type="entry name" value="DUF2205"/>
    <property type="match status" value="1"/>
</dbReference>
<organism>
    <name type="scientific">Mus musculus</name>
    <name type="common">Mouse</name>
    <dbReference type="NCBI Taxonomy" id="10090"/>
    <lineage>
        <taxon>Eukaryota</taxon>
        <taxon>Metazoa</taxon>
        <taxon>Chordata</taxon>
        <taxon>Craniata</taxon>
        <taxon>Vertebrata</taxon>
        <taxon>Euteleostomi</taxon>
        <taxon>Mammalia</taxon>
        <taxon>Eutheria</taxon>
        <taxon>Euarchontoglires</taxon>
        <taxon>Glires</taxon>
        <taxon>Rodentia</taxon>
        <taxon>Myomorpha</taxon>
        <taxon>Muroidea</taxon>
        <taxon>Muridae</taxon>
        <taxon>Murinae</taxon>
        <taxon>Mus</taxon>
        <taxon>Mus</taxon>
    </lineage>
</organism>
<sequence length="125" mass="14155">MSKMDGLSTGEEEDSTFTSISLEDDTDHSLKSWRSRAESLLPKMMNADMDAVDAENQVELEEKTRLINQVLELQHTLEDLSARVDAVKEENLKLKSENQVLGQYIENLMSASSVFQTTDTKSKRK</sequence>
<evidence type="ECO:0000250" key="1">
    <source>
        <dbReference type="UniProtKB" id="Q9UIL1"/>
    </source>
</evidence>
<evidence type="ECO:0000255" key="2"/>
<evidence type="ECO:0000256" key="3">
    <source>
        <dbReference type="SAM" id="MobiDB-lite"/>
    </source>
</evidence>
<evidence type="ECO:0000303" key="4">
    <source>
    </source>
</evidence>
<evidence type="ECO:0000303" key="5">
    <source>
    </source>
</evidence>
<evidence type="ECO:0000303" key="6">
    <source ref="1"/>
</evidence>
<evidence type="ECO:0000305" key="7"/>